<name>PGK_PROMA</name>
<feature type="chain" id="PRO_0000145985" description="Phosphoglycerate kinase">
    <location>
        <begin position="1"/>
        <end position="402"/>
    </location>
</feature>
<feature type="binding site" evidence="1">
    <location>
        <begin position="24"/>
        <end position="26"/>
    </location>
    <ligand>
        <name>substrate</name>
    </ligand>
</feature>
<feature type="binding site" evidence="1">
    <location>
        <position position="40"/>
    </location>
    <ligand>
        <name>substrate</name>
    </ligand>
</feature>
<feature type="binding site" evidence="1">
    <location>
        <begin position="63"/>
        <end position="66"/>
    </location>
    <ligand>
        <name>substrate</name>
    </ligand>
</feature>
<feature type="binding site" evidence="1">
    <location>
        <position position="122"/>
    </location>
    <ligand>
        <name>substrate</name>
    </ligand>
</feature>
<feature type="binding site" evidence="1">
    <location>
        <position position="155"/>
    </location>
    <ligand>
        <name>substrate</name>
    </ligand>
</feature>
<feature type="binding site" evidence="1">
    <location>
        <position position="206"/>
    </location>
    <ligand>
        <name>ATP</name>
        <dbReference type="ChEBI" id="CHEBI:30616"/>
    </ligand>
</feature>
<feature type="binding site" evidence="1">
    <location>
        <position position="297"/>
    </location>
    <ligand>
        <name>ATP</name>
        <dbReference type="ChEBI" id="CHEBI:30616"/>
    </ligand>
</feature>
<feature type="binding site" evidence="1">
    <location>
        <position position="328"/>
    </location>
    <ligand>
        <name>ATP</name>
        <dbReference type="ChEBI" id="CHEBI:30616"/>
    </ligand>
</feature>
<feature type="binding site" evidence="1">
    <location>
        <begin position="357"/>
        <end position="360"/>
    </location>
    <ligand>
        <name>ATP</name>
        <dbReference type="ChEBI" id="CHEBI:30616"/>
    </ligand>
</feature>
<comment type="catalytic activity">
    <reaction evidence="1">
        <text>(2R)-3-phosphoglycerate + ATP = (2R)-3-phospho-glyceroyl phosphate + ADP</text>
        <dbReference type="Rhea" id="RHEA:14801"/>
        <dbReference type="ChEBI" id="CHEBI:30616"/>
        <dbReference type="ChEBI" id="CHEBI:57604"/>
        <dbReference type="ChEBI" id="CHEBI:58272"/>
        <dbReference type="ChEBI" id="CHEBI:456216"/>
        <dbReference type="EC" id="2.7.2.3"/>
    </reaction>
</comment>
<comment type="pathway">
    <text evidence="1">Carbohydrate degradation; glycolysis; pyruvate from D-glyceraldehyde 3-phosphate: step 2/5.</text>
</comment>
<comment type="subunit">
    <text evidence="1">Monomer.</text>
</comment>
<comment type="subcellular location">
    <subcellularLocation>
        <location evidence="1">Cytoplasm</location>
    </subcellularLocation>
</comment>
<comment type="similarity">
    <text evidence="1">Belongs to the phosphoglycerate kinase family.</text>
</comment>
<dbReference type="EC" id="2.7.2.3" evidence="1"/>
<dbReference type="EMBL" id="AE017126">
    <property type="protein sequence ID" value="AAP99267.1"/>
    <property type="molecule type" value="Genomic_DNA"/>
</dbReference>
<dbReference type="RefSeq" id="NP_874615.1">
    <property type="nucleotide sequence ID" value="NC_005042.1"/>
</dbReference>
<dbReference type="RefSeq" id="WP_011124376.1">
    <property type="nucleotide sequence ID" value="NC_005042.1"/>
</dbReference>
<dbReference type="SMR" id="Q7VDZ4"/>
<dbReference type="STRING" id="167539.Pro_0221"/>
<dbReference type="EnsemblBacteria" id="AAP99267">
    <property type="protein sequence ID" value="AAP99267"/>
    <property type="gene ID" value="Pro_0221"/>
</dbReference>
<dbReference type="KEGG" id="pma:Pro_0221"/>
<dbReference type="PATRIC" id="fig|167539.5.peg.228"/>
<dbReference type="eggNOG" id="COG0126">
    <property type="taxonomic scope" value="Bacteria"/>
</dbReference>
<dbReference type="HOGENOM" id="CLU_025427_0_2_3"/>
<dbReference type="OrthoDB" id="9808460at2"/>
<dbReference type="UniPathway" id="UPA00109">
    <property type="reaction ID" value="UER00185"/>
</dbReference>
<dbReference type="Proteomes" id="UP000001420">
    <property type="component" value="Chromosome"/>
</dbReference>
<dbReference type="GO" id="GO:0005829">
    <property type="term" value="C:cytosol"/>
    <property type="evidence" value="ECO:0007669"/>
    <property type="project" value="TreeGrafter"/>
</dbReference>
<dbReference type="GO" id="GO:0043531">
    <property type="term" value="F:ADP binding"/>
    <property type="evidence" value="ECO:0007669"/>
    <property type="project" value="TreeGrafter"/>
</dbReference>
<dbReference type="GO" id="GO:0005524">
    <property type="term" value="F:ATP binding"/>
    <property type="evidence" value="ECO:0007669"/>
    <property type="project" value="UniProtKB-KW"/>
</dbReference>
<dbReference type="GO" id="GO:0004618">
    <property type="term" value="F:phosphoglycerate kinase activity"/>
    <property type="evidence" value="ECO:0007669"/>
    <property type="project" value="UniProtKB-UniRule"/>
</dbReference>
<dbReference type="GO" id="GO:0006094">
    <property type="term" value="P:gluconeogenesis"/>
    <property type="evidence" value="ECO:0007669"/>
    <property type="project" value="TreeGrafter"/>
</dbReference>
<dbReference type="GO" id="GO:0006096">
    <property type="term" value="P:glycolytic process"/>
    <property type="evidence" value="ECO:0007669"/>
    <property type="project" value="UniProtKB-UniRule"/>
</dbReference>
<dbReference type="CDD" id="cd00318">
    <property type="entry name" value="Phosphoglycerate_kinase"/>
    <property type="match status" value="1"/>
</dbReference>
<dbReference type="FunFam" id="3.40.50.1260:FF:000003">
    <property type="entry name" value="Phosphoglycerate kinase"/>
    <property type="match status" value="1"/>
</dbReference>
<dbReference type="FunFam" id="3.40.50.1260:FF:000006">
    <property type="entry name" value="Phosphoglycerate kinase"/>
    <property type="match status" value="1"/>
</dbReference>
<dbReference type="FunFam" id="3.40.50.1260:FF:000017">
    <property type="entry name" value="Phosphoglycerate kinase"/>
    <property type="match status" value="1"/>
</dbReference>
<dbReference type="Gene3D" id="3.40.50.1260">
    <property type="entry name" value="Phosphoglycerate kinase, N-terminal domain"/>
    <property type="match status" value="2"/>
</dbReference>
<dbReference type="HAMAP" id="MF_00145">
    <property type="entry name" value="Phosphoglyc_kinase"/>
    <property type="match status" value="1"/>
</dbReference>
<dbReference type="InterPro" id="IPR001576">
    <property type="entry name" value="Phosphoglycerate_kinase"/>
</dbReference>
<dbReference type="InterPro" id="IPR015911">
    <property type="entry name" value="Phosphoglycerate_kinase_CS"/>
</dbReference>
<dbReference type="InterPro" id="IPR015824">
    <property type="entry name" value="Phosphoglycerate_kinase_N"/>
</dbReference>
<dbReference type="InterPro" id="IPR036043">
    <property type="entry name" value="Phosphoglycerate_kinase_sf"/>
</dbReference>
<dbReference type="PANTHER" id="PTHR11406">
    <property type="entry name" value="PHOSPHOGLYCERATE KINASE"/>
    <property type="match status" value="1"/>
</dbReference>
<dbReference type="PANTHER" id="PTHR11406:SF23">
    <property type="entry name" value="PHOSPHOGLYCERATE KINASE 1, CHLOROPLASTIC-RELATED"/>
    <property type="match status" value="1"/>
</dbReference>
<dbReference type="Pfam" id="PF00162">
    <property type="entry name" value="PGK"/>
    <property type="match status" value="1"/>
</dbReference>
<dbReference type="PIRSF" id="PIRSF000724">
    <property type="entry name" value="Pgk"/>
    <property type="match status" value="1"/>
</dbReference>
<dbReference type="PRINTS" id="PR00477">
    <property type="entry name" value="PHGLYCKINASE"/>
</dbReference>
<dbReference type="SUPFAM" id="SSF53748">
    <property type="entry name" value="Phosphoglycerate kinase"/>
    <property type="match status" value="1"/>
</dbReference>
<dbReference type="PROSITE" id="PS00111">
    <property type="entry name" value="PGLYCERATE_KINASE"/>
    <property type="match status" value="1"/>
</dbReference>
<protein>
    <recommendedName>
        <fullName evidence="1">Phosphoglycerate kinase</fullName>
        <ecNumber evidence="1">2.7.2.3</ecNumber>
    </recommendedName>
</protein>
<organism>
    <name type="scientific">Prochlorococcus marinus (strain SARG / CCMP1375 / SS120)</name>
    <dbReference type="NCBI Taxonomy" id="167539"/>
    <lineage>
        <taxon>Bacteria</taxon>
        <taxon>Bacillati</taxon>
        <taxon>Cyanobacteriota</taxon>
        <taxon>Cyanophyceae</taxon>
        <taxon>Synechococcales</taxon>
        <taxon>Prochlorococcaceae</taxon>
        <taxon>Prochlorococcus</taxon>
    </lineage>
</organism>
<gene>
    <name evidence="1" type="primary">pgk</name>
    <name type="ordered locus">Pro_0221</name>
</gene>
<accession>Q7VDZ4</accession>
<evidence type="ECO:0000255" key="1">
    <source>
        <dbReference type="HAMAP-Rule" id="MF_00145"/>
    </source>
</evidence>
<proteinExistence type="inferred from homology"/>
<reference key="1">
    <citation type="journal article" date="2003" name="Proc. Natl. Acad. Sci. U.S.A.">
        <title>Genome sequence of the cyanobacterium Prochlorococcus marinus SS120, a nearly minimal oxyphototrophic genome.</title>
        <authorList>
            <person name="Dufresne A."/>
            <person name="Salanoubat M."/>
            <person name="Partensky F."/>
            <person name="Artiguenave F."/>
            <person name="Axmann I.M."/>
            <person name="Barbe V."/>
            <person name="Duprat S."/>
            <person name="Galperin M.Y."/>
            <person name="Koonin E.V."/>
            <person name="Le Gall F."/>
            <person name="Makarova K.S."/>
            <person name="Ostrowski M."/>
            <person name="Oztas S."/>
            <person name="Robert C."/>
            <person name="Rogozin I.B."/>
            <person name="Scanlan D.J."/>
            <person name="Tandeau de Marsac N."/>
            <person name="Weissenbach J."/>
            <person name="Wincker P."/>
            <person name="Wolf Y.I."/>
            <person name="Hess W.R."/>
        </authorList>
    </citation>
    <scope>NUCLEOTIDE SEQUENCE [LARGE SCALE GENOMIC DNA]</scope>
    <source>
        <strain>SARG / CCMP1375 / SS120</strain>
    </source>
</reference>
<sequence>MAKRSLSNLSVEDLCGKRVLVRVDFNVPLNEEGSITDDTRIRAALPTIQHLIEKEARVILSAHFGRPKGKVNEDMRLTPVSQRLSELLGKTVVKTESCIGPDAEKKVHEMSNGDVVLLENVRFIGEEEKNDSEFAKKLASLAEVYVNDAFGAAHRAHASTEGVTNYLSPSVAGYLMEKELKYLQGAIDSPQRPLAAIVGGSKVSSKIGVLESLIDKCDKVLIGGGMIFTFYKARGLSVGKSLVEDDKLDLARALEKKAKEKGVQLLLPSDVVLADNFSPDASSQMVQIDSIPEGWMGLDIGKESVKLFQDALADCKTVIWNGPMGVFEFDKFANGTNSISTTLAELSAKGCCTIIGGGDSVAAVEKAGLASKMSHISTGGGASLELLEGKVLPGVAALDDEI</sequence>
<keyword id="KW-0067">ATP-binding</keyword>
<keyword id="KW-0963">Cytoplasm</keyword>
<keyword id="KW-0324">Glycolysis</keyword>
<keyword id="KW-0418">Kinase</keyword>
<keyword id="KW-0547">Nucleotide-binding</keyword>
<keyword id="KW-1185">Reference proteome</keyword>
<keyword id="KW-0808">Transferase</keyword>